<evidence type="ECO:0000255" key="1">
    <source>
        <dbReference type="HAMAP-Rule" id="MF_03069"/>
    </source>
</evidence>
<evidence type="ECO:0000256" key="2">
    <source>
        <dbReference type="SAM" id="MobiDB-lite"/>
    </source>
</evidence>
<evidence type="ECO:0000269" key="3">
    <source>
    </source>
</evidence>
<evidence type="ECO:0000269" key="4">
    <source>
    </source>
</evidence>
<dbReference type="EMBL" id="BC160766">
    <property type="protein sequence ID" value="AAI60766.1"/>
    <property type="molecule type" value="mRNA"/>
</dbReference>
<dbReference type="RefSeq" id="NP_001121243.1">
    <property type="nucleotide sequence ID" value="NM_001127771.1"/>
</dbReference>
<dbReference type="SMR" id="B1H1W9"/>
<dbReference type="GeneID" id="100158322"/>
<dbReference type="KEGG" id="xla:100158322"/>
<dbReference type="AGR" id="Xenbase:XB-GENE-5887592"/>
<dbReference type="CTD" id="100158322"/>
<dbReference type="Xenbase" id="XB-GENE-5887592">
    <property type="gene designation" value="dnaaf2.L"/>
</dbReference>
<dbReference type="OrthoDB" id="546764at2759"/>
<dbReference type="Proteomes" id="UP000186698">
    <property type="component" value="Chromosome 8L"/>
</dbReference>
<dbReference type="Bgee" id="100158322">
    <property type="expression patterns" value="Expressed in blastula and 19 other cell types or tissues"/>
</dbReference>
<dbReference type="GO" id="GO:0005737">
    <property type="term" value="C:cytoplasm"/>
    <property type="evidence" value="ECO:0000250"/>
    <property type="project" value="UniProtKB"/>
</dbReference>
<dbReference type="GO" id="GO:0120293">
    <property type="term" value="C:dynein axonemal particle"/>
    <property type="evidence" value="ECO:0000314"/>
    <property type="project" value="UniProtKB"/>
</dbReference>
<dbReference type="GO" id="GO:0005576">
    <property type="term" value="C:extracellular region"/>
    <property type="evidence" value="ECO:0007669"/>
    <property type="project" value="GOC"/>
</dbReference>
<dbReference type="GO" id="GO:0070286">
    <property type="term" value="P:axonemal dynein complex assembly"/>
    <property type="evidence" value="ECO:0000318"/>
    <property type="project" value="GO_Central"/>
</dbReference>
<dbReference type="GO" id="GO:0060285">
    <property type="term" value="P:cilium-dependent cell motility"/>
    <property type="evidence" value="ECO:0000318"/>
    <property type="project" value="GO_Central"/>
</dbReference>
<dbReference type="GO" id="GO:0003351">
    <property type="term" value="P:epithelial cilium movement involved in extracellular fluid movement"/>
    <property type="evidence" value="ECO:0000318"/>
    <property type="project" value="GO_Central"/>
</dbReference>
<dbReference type="HAMAP" id="MF_03069">
    <property type="entry name" value="Kintoun"/>
    <property type="match status" value="1"/>
</dbReference>
<dbReference type="InterPro" id="IPR034727">
    <property type="entry name" value="Kintoun"/>
</dbReference>
<dbReference type="InterPro" id="IPR050734">
    <property type="entry name" value="PIH1/Kintoun_subfamily"/>
</dbReference>
<dbReference type="InterPro" id="IPR012981">
    <property type="entry name" value="PIH1_N"/>
</dbReference>
<dbReference type="InterPro" id="IPR041442">
    <property type="entry name" value="PIH1D1/2/3_CS-like"/>
</dbReference>
<dbReference type="PANTHER" id="PTHR22997">
    <property type="entry name" value="PIH1 DOMAIN-CONTAINING PROTEIN 1"/>
    <property type="match status" value="1"/>
</dbReference>
<dbReference type="PANTHER" id="PTHR22997:SF3">
    <property type="entry name" value="PROTEIN KINTOUN"/>
    <property type="match status" value="1"/>
</dbReference>
<dbReference type="Pfam" id="PF08190">
    <property type="entry name" value="PIH1"/>
    <property type="match status" value="1"/>
</dbReference>
<dbReference type="Pfam" id="PF18201">
    <property type="entry name" value="PIH1_CS"/>
    <property type="match status" value="1"/>
</dbReference>
<sequence>MAEKLQNLELSSEELDRFTKAFQDPKFREMFVQYAEEIRDPENRRKYEQEISQMESERGMDIKFIHPKPGYVLLTSVNGVQKCYLNICSNDLLQKPECKPGKDGEGKAGLHWSLPYSLSAGREDLGKDGSKHVIYDVVFHPDTLHIASKNEKFKMIVDSTSLEAVASQFDVKLDKANVRTLSMKYKGVPNPSVLRKPLLGTTPKHGDPEDPLSFPYPYDVPTAVGKEKKDQKRVIKEEHKQHVTTSEQDPDIQIATTPNYTVRHRSYVDLQDFRDSRDSTPSPVPKELVITVDLPLLNSAESVNLHIAGKNLSLESEKPAYKLNVKLPYVVEDNQGKAQFNKARRQLIITVPVIQHNILTLMQDHFEEARGEKDLRGAESSVLHEEYTDNGSRTSACGTENKLEPLISCLNEEENNSEGLTSESNLDTGAPYLPEISPNQNTLDREEVVYGLTEDVPSMPSDTLVCPTFSCSQDPTSLTLIAHVRDIDENSISTDVGSNHYHIRCSVKQSTSSYDLLVTFLPHDIINPNEVYVNISENNALIGLTKSPESVGFWKMLYFGVSGQPLQERRFVSEDNINEVLACSIPLSQVSPSTQEHQPLIEVLEMTDERTHIRINKPKTECVVSAEHKEHCTDHSEHERDVGVERSNIAVGDTTEHYSNQVSPCRENTELDRDHTSERYEEPESTSCTGESTSDQQQKDSNLVFPGDSSAENKMACLKSSEQTTQESDLAEDDMPDRSDHTQNFDSRPASSSVLKEIGKKDGSVQVISDHTTQCPFQFQNSLLFDLD</sequence>
<gene>
    <name evidence="1" type="primary">dnaaf2</name>
    <name evidence="1" type="synonym">ktu</name>
</gene>
<organism>
    <name type="scientific">Xenopus laevis</name>
    <name type="common">African clawed frog</name>
    <dbReference type="NCBI Taxonomy" id="8355"/>
    <lineage>
        <taxon>Eukaryota</taxon>
        <taxon>Metazoa</taxon>
        <taxon>Chordata</taxon>
        <taxon>Craniata</taxon>
        <taxon>Vertebrata</taxon>
        <taxon>Euteleostomi</taxon>
        <taxon>Amphibia</taxon>
        <taxon>Batrachia</taxon>
        <taxon>Anura</taxon>
        <taxon>Pipoidea</taxon>
        <taxon>Pipidae</taxon>
        <taxon>Xenopodinae</taxon>
        <taxon>Xenopus</taxon>
        <taxon>Xenopus</taxon>
    </lineage>
</organism>
<accession>B1H1W9</accession>
<protein>
    <recommendedName>
        <fullName evidence="1">Protein kintoun</fullName>
    </recommendedName>
    <alternativeName>
        <fullName evidence="1">Dynein assembly factor 2, axonemal</fullName>
    </alternativeName>
</protein>
<keyword id="KW-0963">Cytoplasm</keyword>
<keyword id="KW-1185">Reference proteome</keyword>
<name>KTU_XENLA</name>
<comment type="function">
    <text evidence="1">Required for cytoplasmic pre-assembly of axonemal dyneins, thereby playing a central role in motility in cilia and flagella. Involved in pre-assembly of dynein arm complexes in the cytoplasm before intraflagellar transport loads them for the ciliary compartment.</text>
</comment>
<comment type="subcellular location">
    <subcellularLocation>
        <location evidence="1">Cytoplasm</location>
    </subcellularLocation>
    <subcellularLocation>
        <location evidence="3 4">Dynein axonemal particle</location>
    </subcellularLocation>
    <text evidence="1">Localizes in the apical cytoplasm around the gamma-tubulin-positive pericentriolar region, not in the cilia.</text>
</comment>
<comment type="similarity">
    <text evidence="1">Belongs to the PIH1 family. Kintoun subfamily.</text>
</comment>
<feature type="chain" id="PRO_0000365800" description="Protein kintoun">
    <location>
        <begin position="1"/>
        <end position="788"/>
    </location>
</feature>
<feature type="region of interest" description="Disordered" evidence="2">
    <location>
        <begin position="194"/>
        <end position="249"/>
    </location>
</feature>
<feature type="region of interest" description="Disordered" evidence="2">
    <location>
        <begin position="415"/>
        <end position="438"/>
    </location>
</feature>
<feature type="region of interest" description="Disordered" evidence="2">
    <location>
        <begin position="628"/>
        <end position="754"/>
    </location>
</feature>
<feature type="compositionally biased region" description="Basic and acidic residues" evidence="2">
    <location>
        <begin position="225"/>
        <end position="241"/>
    </location>
</feature>
<feature type="compositionally biased region" description="Polar residues" evidence="2">
    <location>
        <begin position="417"/>
        <end position="427"/>
    </location>
</feature>
<feature type="compositionally biased region" description="Basic and acidic residues" evidence="2">
    <location>
        <begin position="628"/>
        <end position="644"/>
    </location>
</feature>
<feature type="compositionally biased region" description="Basic and acidic residues" evidence="2">
    <location>
        <begin position="667"/>
        <end position="682"/>
    </location>
</feature>
<feature type="compositionally biased region" description="Polar residues" evidence="2">
    <location>
        <begin position="685"/>
        <end position="701"/>
    </location>
</feature>
<feature type="compositionally biased region" description="Polar residues" evidence="2">
    <location>
        <begin position="744"/>
        <end position="754"/>
    </location>
</feature>
<reference key="1">
    <citation type="submission" date="2008-03" db="EMBL/GenBank/DDBJ databases">
        <authorList>
            <consortium name="NIH - Xenopus Gene Collection (XGC) project"/>
        </authorList>
    </citation>
    <scope>NUCLEOTIDE SEQUENCE [LARGE SCALE MRNA]</scope>
    <source>
        <tissue>Embryo</tissue>
    </source>
</reference>
<reference key="2">
    <citation type="journal article" date="2018" name="Elife">
        <title>A liquid-like organelle at the root of motile ciliopathy.</title>
        <authorList>
            <person name="Huizar R.L."/>
            <person name="Lee C."/>
            <person name="Boulgakov A.A."/>
            <person name="Horani A."/>
            <person name="Tu F."/>
            <person name="Marcotte E.M."/>
            <person name="Brody S.L."/>
            <person name="Wallingford J.B."/>
        </authorList>
    </citation>
    <scope>SUBCELLULAR LOCATION</scope>
</reference>
<reference key="3">
    <citation type="journal article" date="2020" name="Elife">
        <title>Functional partitioning of a liquid-like organelle during assembly of axonemal dyneins.</title>
        <authorList>
            <person name="Lee C."/>
            <person name="Cox R.M."/>
            <person name="Papoulas O."/>
            <person name="Horani A."/>
            <person name="Drew K."/>
            <person name="Devitt C.C."/>
            <person name="Brody S.L."/>
            <person name="Marcotte E.M."/>
            <person name="Wallingford J.B."/>
        </authorList>
    </citation>
    <scope>SUBCELLULAR LOCATION</scope>
</reference>
<proteinExistence type="evidence at transcript level"/>